<accession>Q9H2B2</accession>
<accession>B4DEU3</accession>
<accession>Q9P2K4</accession>
<reference key="1">
    <citation type="journal article" date="2000" name="J. Biol. Chem.">
        <title>The human synaptotagmin IV gene defines an evolutionary break point between syntenic mouse and human chromosome regions but retains ligand inducibility and tissue specificity.</title>
        <authorList>
            <person name="Ferguson G.D."/>
            <person name="Chen X.-N."/>
            <person name="Korenberg J.R."/>
            <person name="Herschman H.R."/>
        </authorList>
    </citation>
    <scope>NUCLEOTIDE SEQUENCE [MRNA] (ISOFORM 1)</scope>
</reference>
<reference key="2">
    <citation type="journal article" date="2000" name="DNA Res.">
        <title>Prediction of the coding sequences of unidentified human genes. XVI. The complete sequences of 150 new cDNA clones from brain which code for large proteins in vitro.</title>
        <authorList>
            <person name="Nagase T."/>
            <person name="Kikuno R."/>
            <person name="Ishikawa K."/>
            <person name="Hirosawa M."/>
            <person name="Ohara O."/>
        </authorList>
    </citation>
    <scope>NUCLEOTIDE SEQUENCE [LARGE SCALE MRNA] (ISOFORM 1)</scope>
    <source>
        <tissue>Brain</tissue>
    </source>
</reference>
<reference key="3">
    <citation type="journal article" date="2004" name="Nat. Genet.">
        <title>Complete sequencing and characterization of 21,243 full-length human cDNAs.</title>
        <authorList>
            <person name="Ota T."/>
            <person name="Suzuki Y."/>
            <person name="Nishikawa T."/>
            <person name="Otsuki T."/>
            <person name="Sugiyama T."/>
            <person name="Irie R."/>
            <person name="Wakamatsu A."/>
            <person name="Hayashi K."/>
            <person name="Sato H."/>
            <person name="Nagai K."/>
            <person name="Kimura K."/>
            <person name="Makita H."/>
            <person name="Sekine M."/>
            <person name="Obayashi M."/>
            <person name="Nishi T."/>
            <person name="Shibahara T."/>
            <person name="Tanaka T."/>
            <person name="Ishii S."/>
            <person name="Yamamoto J."/>
            <person name="Saito K."/>
            <person name="Kawai Y."/>
            <person name="Isono Y."/>
            <person name="Nakamura Y."/>
            <person name="Nagahari K."/>
            <person name="Murakami K."/>
            <person name="Yasuda T."/>
            <person name="Iwayanagi T."/>
            <person name="Wagatsuma M."/>
            <person name="Shiratori A."/>
            <person name="Sudo H."/>
            <person name="Hosoiri T."/>
            <person name="Kaku Y."/>
            <person name="Kodaira H."/>
            <person name="Kondo H."/>
            <person name="Sugawara M."/>
            <person name="Takahashi M."/>
            <person name="Kanda K."/>
            <person name="Yokoi T."/>
            <person name="Furuya T."/>
            <person name="Kikkawa E."/>
            <person name="Omura Y."/>
            <person name="Abe K."/>
            <person name="Kamihara K."/>
            <person name="Katsuta N."/>
            <person name="Sato K."/>
            <person name="Tanikawa M."/>
            <person name="Yamazaki M."/>
            <person name="Ninomiya K."/>
            <person name="Ishibashi T."/>
            <person name="Yamashita H."/>
            <person name="Murakawa K."/>
            <person name="Fujimori K."/>
            <person name="Tanai H."/>
            <person name="Kimata M."/>
            <person name="Watanabe M."/>
            <person name="Hiraoka S."/>
            <person name="Chiba Y."/>
            <person name="Ishida S."/>
            <person name="Ono Y."/>
            <person name="Takiguchi S."/>
            <person name="Watanabe S."/>
            <person name="Yosida M."/>
            <person name="Hotuta T."/>
            <person name="Kusano J."/>
            <person name="Kanehori K."/>
            <person name="Takahashi-Fujii A."/>
            <person name="Hara H."/>
            <person name="Tanase T.-O."/>
            <person name="Nomura Y."/>
            <person name="Togiya S."/>
            <person name="Komai F."/>
            <person name="Hara R."/>
            <person name="Takeuchi K."/>
            <person name="Arita M."/>
            <person name="Imose N."/>
            <person name="Musashino K."/>
            <person name="Yuuki H."/>
            <person name="Oshima A."/>
            <person name="Sasaki N."/>
            <person name="Aotsuka S."/>
            <person name="Yoshikawa Y."/>
            <person name="Matsunawa H."/>
            <person name="Ichihara T."/>
            <person name="Shiohata N."/>
            <person name="Sano S."/>
            <person name="Moriya S."/>
            <person name="Momiyama H."/>
            <person name="Satoh N."/>
            <person name="Takami S."/>
            <person name="Terashima Y."/>
            <person name="Suzuki O."/>
            <person name="Nakagawa S."/>
            <person name="Senoh A."/>
            <person name="Mizoguchi H."/>
            <person name="Goto Y."/>
            <person name="Shimizu F."/>
            <person name="Wakebe H."/>
            <person name="Hishigaki H."/>
            <person name="Watanabe T."/>
            <person name="Sugiyama A."/>
            <person name="Takemoto M."/>
            <person name="Kawakami B."/>
            <person name="Yamazaki M."/>
            <person name="Watanabe K."/>
            <person name="Kumagai A."/>
            <person name="Itakura S."/>
            <person name="Fukuzumi Y."/>
            <person name="Fujimori Y."/>
            <person name="Komiyama M."/>
            <person name="Tashiro H."/>
            <person name="Tanigami A."/>
            <person name="Fujiwara T."/>
            <person name="Ono T."/>
            <person name="Yamada K."/>
            <person name="Fujii Y."/>
            <person name="Ozaki K."/>
            <person name="Hirao M."/>
            <person name="Ohmori Y."/>
            <person name="Kawabata A."/>
            <person name="Hikiji T."/>
            <person name="Kobatake N."/>
            <person name="Inagaki H."/>
            <person name="Ikema Y."/>
            <person name="Okamoto S."/>
            <person name="Okitani R."/>
            <person name="Kawakami T."/>
            <person name="Noguchi S."/>
            <person name="Itoh T."/>
            <person name="Shigeta K."/>
            <person name="Senba T."/>
            <person name="Matsumura K."/>
            <person name="Nakajima Y."/>
            <person name="Mizuno T."/>
            <person name="Morinaga M."/>
            <person name="Sasaki M."/>
            <person name="Togashi T."/>
            <person name="Oyama M."/>
            <person name="Hata H."/>
            <person name="Watanabe M."/>
            <person name="Komatsu T."/>
            <person name="Mizushima-Sugano J."/>
            <person name="Satoh T."/>
            <person name="Shirai Y."/>
            <person name="Takahashi Y."/>
            <person name="Nakagawa K."/>
            <person name="Okumura K."/>
            <person name="Nagase T."/>
            <person name="Nomura N."/>
            <person name="Kikuchi H."/>
            <person name="Masuho Y."/>
            <person name="Yamashita R."/>
            <person name="Nakai K."/>
            <person name="Yada T."/>
            <person name="Nakamura Y."/>
            <person name="Ohara O."/>
            <person name="Isogai T."/>
            <person name="Sugano S."/>
        </authorList>
    </citation>
    <scope>NUCLEOTIDE SEQUENCE [LARGE SCALE MRNA] (ISOFORM 2)</scope>
    <source>
        <tissue>Cerebellum</tissue>
    </source>
</reference>
<reference key="4">
    <citation type="journal article" date="2005" name="Nature">
        <title>DNA sequence and analysis of human chromosome 18.</title>
        <authorList>
            <person name="Nusbaum C."/>
            <person name="Zody M.C."/>
            <person name="Borowsky M.L."/>
            <person name="Kamal M."/>
            <person name="Kodira C.D."/>
            <person name="Taylor T.D."/>
            <person name="Whittaker C.A."/>
            <person name="Chang J.L."/>
            <person name="Cuomo C.A."/>
            <person name="Dewar K."/>
            <person name="FitzGerald M.G."/>
            <person name="Yang X."/>
            <person name="Abouelleil A."/>
            <person name="Allen N.R."/>
            <person name="Anderson S."/>
            <person name="Bloom T."/>
            <person name="Bugalter B."/>
            <person name="Butler J."/>
            <person name="Cook A."/>
            <person name="DeCaprio D."/>
            <person name="Engels R."/>
            <person name="Garber M."/>
            <person name="Gnirke A."/>
            <person name="Hafez N."/>
            <person name="Hall J.L."/>
            <person name="Norman C.H."/>
            <person name="Itoh T."/>
            <person name="Jaffe D.B."/>
            <person name="Kuroki Y."/>
            <person name="Lehoczky J."/>
            <person name="Lui A."/>
            <person name="Macdonald P."/>
            <person name="Mauceli E."/>
            <person name="Mikkelsen T.S."/>
            <person name="Naylor J.W."/>
            <person name="Nicol R."/>
            <person name="Nguyen C."/>
            <person name="Noguchi H."/>
            <person name="O'Leary S.B."/>
            <person name="Piqani B."/>
            <person name="Smith C.L."/>
            <person name="Talamas J.A."/>
            <person name="Topham K."/>
            <person name="Totoki Y."/>
            <person name="Toyoda A."/>
            <person name="Wain H.M."/>
            <person name="Young S.K."/>
            <person name="Zeng Q."/>
            <person name="Zimmer A.R."/>
            <person name="Fujiyama A."/>
            <person name="Hattori M."/>
            <person name="Birren B.W."/>
            <person name="Sakaki Y."/>
            <person name="Lander E.S."/>
        </authorList>
    </citation>
    <scope>NUCLEOTIDE SEQUENCE [LARGE SCALE GENOMIC DNA]</scope>
</reference>
<reference key="5">
    <citation type="journal article" date="2004" name="Genome Res.">
        <title>The status, quality, and expansion of the NIH full-length cDNA project: the Mammalian Gene Collection (MGC).</title>
        <authorList>
            <consortium name="The MGC Project Team"/>
        </authorList>
    </citation>
    <scope>NUCLEOTIDE SEQUENCE [LARGE SCALE MRNA] (ISOFORM 1)</scope>
    <source>
        <tissue>Brain</tissue>
    </source>
</reference>
<reference key="6">
    <citation type="journal article" date="2013" name="J. Dermatol. Sci.">
        <title>SYT14L, especially its C2 domain, is involved in regulating melanocyte differentiation.</title>
        <authorList>
            <person name="Yoo J.C."/>
            <person name="Lim T.Y."/>
            <person name="Park J.S."/>
            <person name="Hah Y.S."/>
            <person name="Park N."/>
            <person name="Hong S.G."/>
            <person name="Park J.Y."/>
            <person name="Yoon T.J."/>
        </authorList>
    </citation>
    <scope>FUNCTION</scope>
    <scope>TISSUE SPECIFICITY</scope>
</reference>
<reference key="7">
    <citation type="submission" date="2003-12" db="PDB data bank">
        <title>Solution structure of the first C2 domain of synaptotagmin IV from human fetal brain (KIAA1342).</title>
        <authorList>
            <consortium name="RIKEN structural genomics initiative (RSGI)"/>
        </authorList>
    </citation>
    <scope>STRUCTURE BY NMR OF 154-278</scope>
</reference>
<protein>
    <recommendedName>
        <fullName>Synaptotagmin-4</fullName>
    </recommendedName>
    <alternativeName>
        <fullName>Synaptotagmin IV</fullName>
        <shortName>SytIV</shortName>
    </alternativeName>
</protein>
<organism>
    <name type="scientific">Homo sapiens</name>
    <name type="common">Human</name>
    <dbReference type="NCBI Taxonomy" id="9606"/>
    <lineage>
        <taxon>Eukaryota</taxon>
        <taxon>Metazoa</taxon>
        <taxon>Chordata</taxon>
        <taxon>Craniata</taxon>
        <taxon>Vertebrata</taxon>
        <taxon>Euteleostomi</taxon>
        <taxon>Mammalia</taxon>
        <taxon>Eutheria</taxon>
        <taxon>Euarchontoglires</taxon>
        <taxon>Primates</taxon>
        <taxon>Haplorrhini</taxon>
        <taxon>Catarrhini</taxon>
        <taxon>Hominidae</taxon>
        <taxon>Homo</taxon>
    </lineage>
</organism>
<gene>
    <name type="primary">SYT4</name>
    <name type="synonym">KIAA1342</name>
</gene>
<keyword id="KW-0002">3D-structure</keyword>
<keyword id="KW-0025">Alternative splicing</keyword>
<keyword id="KW-0106">Calcium</keyword>
<keyword id="KW-0968">Cytoplasmic vesicle</keyword>
<keyword id="KW-0221">Differentiation</keyword>
<keyword id="KW-0472">Membrane</keyword>
<keyword id="KW-0479">Metal-binding</keyword>
<keyword id="KW-0597">Phosphoprotein</keyword>
<keyword id="KW-1267">Proteomics identification</keyword>
<keyword id="KW-1185">Reference proteome</keyword>
<keyword id="KW-0677">Repeat</keyword>
<keyword id="KW-0812">Transmembrane</keyword>
<keyword id="KW-1133">Transmembrane helix</keyword>
<dbReference type="EMBL" id="AF299075">
    <property type="protein sequence ID" value="AAG37229.1"/>
    <property type="molecule type" value="mRNA"/>
</dbReference>
<dbReference type="EMBL" id="AB037763">
    <property type="protein sequence ID" value="BAA92580.1"/>
    <property type="status" value="ALT_INIT"/>
    <property type="molecule type" value="mRNA"/>
</dbReference>
<dbReference type="EMBL" id="AK293791">
    <property type="protein sequence ID" value="BAG57204.1"/>
    <property type="molecule type" value="mRNA"/>
</dbReference>
<dbReference type="EMBL" id="AC091039">
    <property type="status" value="NOT_ANNOTATED_CDS"/>
    <property type="molecule type" value="Genomic_DNA"/>
</dbReference>
<dbReference type="EMBL" id="BC036538">
    <property type="protein sequence ID" value="AAH36538.1"/>
    <property type="molecule type" value="mRNA"/>
</dbReference>
<dbReference type="CCDS" id="CCDS11922.1">
    <molecule id="Q9H2B2-1"/>
</dbReference>
<dbReference type="RefSeq" id="NP_065834.1">
    <molecule id="Q9H2B2-1"/>
    <property type="nucleotide sequence ID" value="NM_020783.4"/>
</dbReference>
<dbReference type="PDB" id="1UGK">
    <property type="method" value="NMR"/>
    <property type="chains" value="A=154-278"/>
</dbReference>
<dbReference type="PDBsum" id="1UGK"/>
<dbReference type="SMR" id="Q9H2B2"/>
<dbReference type="BioGRID" id="112724">
    <property type="interactions" value="9"/>
</dbReference>
<dbReference type="ELM" id="Q9H2B2"/>
<dbReference type="FunCoup" id="Q9H2B2">
    <property type="interactions" value="713"/>
</dbReference>
<dbReference type="IntAct" id="Q9H2B2">
    <property type="interactions" value="8"/>
</dbReference>
<dbReference type="MINT" id="Q9H2B2"/>
<dbReference type="STRING" id="9606.ENSP00000255224"/>
<dbReference type="GlyConnect" id="2930">
    <property type="glycosylation" value="1 O-Linked glycan (1 site)"/>
</dbReference>
<dbReference type="iPTMnet" id="Q9H2B2"/>
<dbReference type="PhosphoSitePlus" id="Q9H2B2"/>
<dbReference type="SwissPalm" id="Q9H2B2"/>
<dbReference type="BioMuta" id="SYT4"/>
<dbReference type="DMDM" id="18202937"/>
<dbReference type="jPOST" id="Q9H2B2"/>
<dbReference type="MassIVE" id="Q9H2B2"/>
<dbReference type="PaxDb" id="9606-ENSP00000255224"/>
<dbReference type="PeptideAtlas" id="Q9H2B2"/>
<dbReference type="ProteomicsDB" id="80522">
    <molecule id="Q9H2B2-1"/>
</dbReference>
<dbReference type="Antibodypedia" id="22400">
    <property type="antibodies" value="394 antibodies from 30 providers"/>
</dbReference>
<dbReference type="DNASU" id="6860"/>
<dbReference type="Ensembl" id="ENST00000255224.8">
    <molecule id="Q9H2B2-1"/>
    <property type="protein sequence ID" value="ENSP00000255224.2"/>
    <property type="gene ID" value="ENSG00000132872.12"/>
</dbReference>
<dbReference type="Ensembl" id="ENST00000590752.5">
    <molecule id="Q9H2B2-2"/>
    <property type="protein sequence ID" value="ENSP00000466930.1"/>
    <property type="gene ID" value="ENSG00000132872.12"/>
</dbReference>
<dbReference type="GeneID" id="6860"/>
<dbReference type="KEGG" id="hsa:6860"/>
<dbReference type="MANE-Select" id="ENST00000255224.8">
    <property type="protein sequence ID" value="ENSP00000255224.2"/>
    <property type="RefSeq nucleotide sequence ID" value="NM_020783.4"/>
    <property type="RefSeq protein sequence ID" value="NP_065834.1"/>
</dbReference>
<dbReference type="UCSC" id="uc002law.4">
    <molecule id="Q9H2B2-1"/>
    <property type="organism name" value="human"/>
</dbReference>
<dbReference type="AGR" id="HGNC:11512"/>
<dbReference type="CTD" id="6860"/>
<dbReference type="DisGeNET" id="6860"/>
<dbReference type="GeneCards" id="SYT4"/>
<dbReference type="HGNC" id="HGNC:11512">
    <property type="gene designation" value="SYT4"/>
</dbReference>
<dbReference type="HPA" id="ENSG00000132872">
    <property type="expression patterns" value="Tissue enriched (brain)"/>
</dbReference>
<dbReference type="MIM" id="600103">
    <property type="type" value="gene"/>
</dbReference>
<dbReference type="neXtProt" id="NX_Q9H2B2"/>
<dbReference type="OpenTargets" id="ENSG00000132872"/>
<dbReference type="PharmGKB" id="PA36293"/>
<dbReference type="VEuPathDB" id="HostDB:ENSG00000132872"/>
<dbReference type="eggNOG" id="KOG1028">
    <property type="taxonomic scope" value="Eukaryota"/>
</dbReference>
<dbReference type="GeneTree" id="ENSGT00940000159026"/>
<dbReference type="HOGENOM" id="CLU_023008_7_3_1"/>
<dbReference type="InParanoid" id="Q9H2B2"/>
<dbReference type="OMA" id="SIEYNFE"/>
<dbReference type="OrthoDB" id="270970at2759"/>
<dbReference type="PAN-GO" id="Q9H2B2">
    <property type="GO annotations" value="14 GO annotations based on evolutionary models"/>
</dbReference>
<dbReference type="PhylomeDB" id="Q9H2B2"/>
<dbReference type="TreeFam" id="TF315600"/>
<dbReference type="PathwayCommons" id="Q9H2B2"/>
<dbReference type="SignaLink" id="Q9H2B2"/>
<dbReference type="SIGNOR" id="Q9H2B2"/>
<dbReference type="BioGRID-ORCS" id="6860">
    <property type="hits" value="14 hits in 1146 CRISPR screens"/>
</dbReference>
<dbReference type="ChiTaRS" id="SYT4">
    <property type="organism name" value="human"/>
</dbReference>
<dbReference type="EvolutionaryTrace" id="Q9H2B2"/>
<dbReference type="GeneWiki" id="SYT4"/>
<dbReference type="GenomeRNAi" id="6860"/>
<dbReference type="Pharos" id="Q9H2B2">
    <property type="development level" value="Tbio"/>
</dbReference>
<dbReference type="PRO" id="PR:Q9H2B2"/>
<dbReference type="Proteomes" id="UP000005640">
    <property type="component" value="Chromosome 18"/>
</dbReference>
<dbReference type="RNAct" id="Q9H2B2">
    <property type="molecule type" value="protein"/>
</dbReference>
<dbReference type="Bgee" id="ENSG00000132872">
    <property type="expression patterns" value="Expressed in cerebellar vermis and 129 other cell types or tissues"/>
</dbReference>
<dbReference type="ExpressionAtlas" id="Q9H2B2">
    <property type="expression patterns" value="baseline and differential"/>
</dbReference>
<dbReference type="GO" id="GO:0097449">
    <property type="term" value="C:astrocyte projection"/>
    <property type="evidence" value="ECO:0007669"/>
    <property type="project" value="Ensembl"/>
</dbReference>
<dbReference type="GO" id="GO:0030424">
    <property type="term" value="C:axon"/>
    <property type="evidence" value="ECO:0000318"/>
    <property type="project" value="GO_Central"/>
</dbReference>
<dbReference type="GO" id="GO:0030425">
    <property type="term" value="C:dendrite"/>
    <property type="evidence" value="ECO:0007669"/>
    <property type="project" value="Ensembl"/>
</dbReference>
<dbReference type="GO" id="GO:0032127">
    <property type="term" value="C:dense core granule membrane"/>
    <property type="evidence" value="ECO:0000303"/>
    <property type="project" value="ParkinsonsUK-UCL"/>
</dbReference>
<dbReference type="GO" id="GO:0070382">
    <property type="term" value="C:exocytic vesicle"/>
    <property type="evidence" value="ECO:0000318"/>
    <property type="project" value="GO_Central"/>
</dbReference>
<dbReference type="GO" id="GO:0098978">
    <property type="term" value="C:glutamatergic synapse"/>
    <property type="evidence" value="ECO:0007669"/>
    <property type="project" value="Ensembl"/>
</dbReference>
<dbReference type="GO" id="GO:0000139">
    <property type="term" value="C:Golgi membrane"/>
    <property type="evidence" value="ECO:0000303"/>
    <property type="project" value="ParkinsonsUK-UCL"/>
</dbReference>
<dbReference type="GO" id="GO:1990742">
    <property type="term" value="C:microvesicle"/>
    <property type="evidence" value="ECO:0007669"/>
    <property type="project" value="Ensembl"/>
</dbReference>
<dbReference type="GO" id="GO:0043025">
    <property type="term" value="C:neuronal cell body"/>
    <property type="evidence" value="ECO:0007669"/>
    <property type="project" value="Ensembl"/>
</dbReference>
<dbReference type="GO" id="GO:0098992">
    <property type="term" value="C:neuronal dense core vesicle"/>
    <property type="evidence" value="ECO:0000250"/>
    <property type="project" value="UniProtKB"/>
</dbReference>
<dbReference type="GO" id="GO:0099012">
    <property type="term" value="C:neuronal dense core vesicle membrane"/>
    <property type="evidence" value="ECO:0007669"/>
    <property type="project" value="UniProtKB-SubCell"/>
</dbReference>
<dbReference type="GO" id="GO:0048471">
    <property type="term" value="C:perinuclear region of cytoplasm"/>
    <property type="evidence" value="ECO:0007669"/>
    <property type="project" value="Ensembl"/>
</dbReference>
<dbReference type="GO" id="GO:0005886">
    <property type="term" value="C:plasma membrane"/>
    <property type="evidence" value="ECO:0000318"/>
    <property type="project" value="GO_Central"/>
</dbReference>
<dbReference type="GO" id="GO:0045202">
    <property type="term" value="C:synapse"/>
    <property type="evidence" value="ECO:0000318"/>
    <property type="project" value="GO_Central"/>
</dbReference>
<dbReference type="GO" id="GO:0030672">
    <property type="term" value="C:synaptic vesicle membrane"/>
    <property type="evidence" value="ECO:0000303"/>
    <property type="project" value="ParkinsonsUK-UCL"/>
</dbReference>
<dbReference type="GO" id="GO:0005509">
    <property type="term" value="F:calcium ion binding"/>
    <property type="evidence" value="ECO:0007669"/>
    <property type="project" value="Ensembl"/>
</dbReference>
<dbReference type="GO" id="GO:0061891">
    <property type="term" value="F:calcium ion sensor activity"/>
    <property type="evidence" value="ECO:0000318"/>
    <property type="project" value="GO_Central"/>
</dbReference>
<dbReference type="GO" id="GO:0005544">
    <property type="term" value="F:calcium-dependent phospholipid binding"/>
    <property type="evidence" value="ECO:0000318"/>
    <property type="project" value="GO_Central"/>
</dbReference>
<dbReference type="GO" id="GO:0000149">
    <property type="term" value="F:SNARE binding"/>
    <property type="evidence" value="ECO:0000318"/>
    <property type="project" value="GO_Central"/>
</dbReference>
<dbReference type="GO" id="GO:0099502">
    <property type="term" value="P:calcium-dependent activation of synaptic vesicle fusion"/>
    <property type="evidence" value="ECO:0000318"/>
    <property type="project" value="GO_Central"/>
</dbReference>
<dbReference type="GO" id="GO:0030154">
    <property type="term" value="P:cell differentiation"/>
    <property type="evidence" value="ECO:0007669"/>
    <property type="project" value="UniProtKB-KW"/>
</dbReference>
<dbReference type="GO" id="GO:0099519">
    <property type="term" value="P:dense core granule cytoskeletal transport"/>
    <property type="evidence" value="ECO:0000250"/>
    <property type="project" value="UniProtKB"/>
</dbReference>
<dbReference type="GO" id="GO:0007613">
    <property type="term" value="P:memory"/>
    <property type="evidence" value="ECO:0007669"/>
    <property type="project" value="Ensembl"/>
</dbReference>
<dbReference type="GO" id="GO:0045955">
    <property type="term" value="P:negative regulation of calcium ion-dependent exocytosis"/>
    <property type="evidence" value="ECO:0000303"/>
    <property type="project" value="ParkinsonsUK-UCL"/>
</dbReference>
<dbReference type="GO" id="GO:0033604">
    <property type="term" value="P:negative regulation of catecholamine secretion"/>
    <property type="evidence" value="ECO:0000316"/>
    <property type="project" value="ParkinsonsUK-UCL"/>
</dbReference>
<dbReference type="GO" id="GO:0050709">
    <property type="term" value="P:negative regulation of protein secretion"/>
    <property type="evidence" value="ECO:0007669"/>
    <property type="project" value="Ensembl"/>
</dbReference>
<dbReference type="GO" id="GO:1905433">
    <property type="term" value="P:negative regulation of retrograde trans-synaptic signaling by neuropeptide"/>
    <property type="evidence" value="ECO:0007669"/>
    <property type="project" value="Ensembl"/>
</dbReference>
<dbReference type="GO" id="GO:0048174">
    <property type="term" value="P:negative regulation of short-term neuronal synaptic plasticity"/>
    <property type="evidence" value="ECO:0007669"/>
    <property type="project" value="Ensembl"/>
</dbReference>
<dbReference type="GO" id="GO:2000301">
    <property type="term" value="P:negative regulation of synaptic vesicle exocytosis"/>
    <property type="evidence" value="ECO:0007669"/>
    <property type="project" value="Ensembl"/>
</dbReference>
<dbReference type="GO" id="GO:0045956">
    <property type="term" value="P:positive regulation of calcium ion-dependent exocytosis"/>
    <property type="evidence" value="ECO:0000303"/>
    <property type="project" value="ParkinsonsUK-UCL"/>
</dbReference>
<dbReference type="GO" id="GO:1903861">
    <property type="term" value="P:positive regulation of dendrite extension"/>
    <property type="evidence" value="ECO:0000314"/>
    <property type="project" value="UniProtKB"/>
</dbReference>
<dbReference type="GO" id="GO:1905415">
    <property type="term" value="P:positive regulation of dense core granule exocytosis"/>
    <property type="evidence" value="ECO:0007669"/>
    <property type="project" value="Ensembl"/>
</dbReference>
<dbReference type="GO" id="GO:0014049">
    <property type="term" value="P:positive regulation of glutamate secretion"/>
    <property type="evidence" value="ECO:0007669"/>
    <property type="project" value="Ensembl"/>
</dbReference>
<dbReference type="GO" id="GO:0017158">
    <property type="term" value="P:regulation of calcium ion-dependent exocytosis"/>
    <property type="evidence" value="ECO:0000318"/>
    <property type="project" value="GO_Central"/>
</dbReference>
<dbReference type="GO" id="GO:0014059">
    <property type="term" value="P:regulation of dopamine secretion"/>
    <property type="evidence" value="ECO:0007669"/>
    <property type="project" value="Ensembl"/>
</dbReference>
<dbReference type="GO" id="GO:0030100">
    <property type="term" value="P:regulation of endocytosis"/>
    <property type="evidence" value="ECO:0007669"/>
    <property type="project" value="Ensembl"/>
</dbReference>
<dbReference type="GO" id="GO:0150044">
    <property type="term" value="P:regulation of postsynaptic dense core vesicle exocytosis"/>
    <property type="evidence" value="ECO:0007669"/>
    <property type="project" value="Ensembl"/>
</dbReference>
<dbReference type="GO" id="GO:0150035">
    <property type="term" value="P:regulation of trans-synaptic signaling by BDNF, modulating synaptic transmission"/>
    <property type="evidence" value="ECO:0007669"/>
    <property type="project" value="Ensembl"/>
</dbReference>
<dbReference type="GO" id="GO:0006906">
    <property type="term" value="P:vesicle fusion"/>
    <property type="evidence" value="ECO:0000318"/>
    <property type="project" value="GO_Central"/>
</dbReference>
<dbReference type="GO" id="GO:0016192">
    <property type="term" value="P:vesicle-mediated transport"/>
    <property type="evidence" value="ECO:0000318"/>
    <property type="project" value="GO_Central"/>
</dbReference>
<dbReference type="CDD" id="cd08388">
    <property type="entry name" value="C2A_Synaptotagmin-4-11"/>
    <property type="match status" value="1"/>
</dbReference>
<dbReference type="CDD" id="cd08404">
    <property type="entry name" value="C2B_Synaptotagmin-4"/>
    <property type="match status" value="1"/>
</dbReference>
<dbReference type="FunFam" id="2.60.40.150:FF:000039">
    <property type="entry name" value="Synaptotagmin 11"/>
    <property type="match status" value="1"/>
</dbReference>
<dbReference type="FunFam" id="2.60.40.150:FF:000051">
    <property type="entry name" value="Synaptotagmin 11"/>
    <property type="match status" value="1"/>
</dbReference>
<dbReference type="Gene3D" id="2.60.40.150">
    <property type="entry name" value="C2 domain"/>
    <property type="match status" value="2"/>
</dbReference>
<dbReference type="InterPro" id="IPR000008">
    <property type="entry name" value="C2_dom"/>
</dbReference>
<dbReference type="InterPro" id="IPR035892">
    <property type="entry name" value="C2_domain_sf"/>
</dbReference>
<dbReference type="InterPro" id="IPR001565">
    <property type="entry name" value="Synaptotagmin"/>
</dbReference>
<dbReference type="PANTHER" id="PTHR10024">
    <property type="entry name" value="SYNAPTOTAGMIN"/>
    <property type="match status" value="1"/>
</dbReference>
<dbReference type="PANTHER" id="PTHR10024:SF114">
    <property type="entry name" value="SYNAPTOTAGMIN-4"/>
    <property type="match status" value="1"/>
</dbReference>
<dbReference type="Pfam" id="PF00168">
    <property type="entry name" value="C2"/>
    <property type="match status" value="2"/>
</dbReference>
<dbReference type="PRINTS" id="PR00399">
    <property type="entry name" value="SYNAPTOTAGMN"/>
</dbReference>
<dbReference type="SMART" id="SM00239">
    <property type="entry name" value="C2"/>
    <property type="match status" value="2"/>
</dbReference>
<dbReference type="SUPFAM" id="SSF49562">
    <property type="entry name" value="C2 domain (Calcium/lipid-binding domain, CaLB)"/>
    <property type="match status" value="2"/>
</dbReference>
<dbReference type="PROSITE" id="PS50004">
    <property type="entry name" value="C2"/>
    <property type="match status" value="2"/>
</dbReference>
<name>SYT4_HUMAN</name>
<comment type="function">
    <text evidence="2 6">Synaptotagmin family member which does not bind Ca(2+) (By similarity) (PubMed:23999003). Involved in neuronal dense core vesicles (DCVs) mobility through its interaction with KIF1A. Upon increased neuronal activity, phosphorylation by MAPK8/JNK1 destabilizes the interaction with KIF1A and captures DCVs to synapses (By similarity). Plays a role in dendrite formation by melanocytes (PubMed:23999003).</text>
</comment>
<comment type="cofactor">
    <cofactor evidence="4">
        <name>Ca(2+)</name>
        <dbReference type="ChEBI" id="CHEBI:29108"/>
    </cofactor>
</comment>
<comment type="subunit">
    <text evidence="2">Interacts with KIF1A; the interaction increases in presence of calcium and decreases when SYT4 is phosphorylated at Ser-135.</text>
</comment>
<comment type="interaction">
    <interactant intactId="EBI-751132">
        <id>Q9H2B2</id>
    </interactant>
    <interactant intactId="EBI-742698">
        <id>Q14596</id>
        <label>NBR1</label>
    </interactant>
    <organismsDiffer>false</organismsDiffer>
    <experiments>3</experiments>
</comment>
<comment type="interaction">
    <interactant intactId="EBI-751132">
        <id>Q9H2B2</id>
    </interactant>
    <interactant intactId="EBI-11081753">
        <id>Q14596-2</id>
        <label>NBR1</label>
    </interactant>
    <organismsDiffer>false</organismsDiffer>
    <experiments>3</experiments>
</comment>
<comment type="interaction">
    <interactant intactId="EBI-751132">
        <id>Q9H2B2</id>
    </interactant>
    <interactant intactId="EBI-1246332">
        <id>Q9UI09</id>
        <label>NDUFA12</label>
    </interactant>
    <organismsDiffer>false</organismsDiffer>
    <experiments>3</experiments>
</comment>
<comment type="interaction">
    <interactant intactId="EBI-751132">
        <id>Q9H2B2</id>
    </interactant>
    <interactant intactId="EBI-347996">
        <id>O43765</id>
        <label>SGTA</label>
    </interactant>
    <organismsDiffer>false</organismsDiffer>
    <experiments>7</experiments>
</comment>
<comment type="interaction">
    <interactant intactId="EBI-751132">
        <id>Q9H2B2</id>
    </interactant>
    <interactant intactId="EBI-744081">
        <id>Q96EQ0</id>
        <label>SGTB</label>
    </interactant>
    <organismsDiffer>false</organismsDiffer>
    <experiments>3</experiments>
</comment>
<comment type="subcellular location">
    <subcellularLocation>
        <location evidence="2">Cytoplasmic vesicle</location>
        <location evidence="2">Secretory vesicle</location>
        <location evidence="2">Neuronal dense core vesicle membrane</location>
        <topology evidence="2">Single-pass membrane protein</topology>
    </subcellularLocation>
</comment>
<comment type="alternative products">
    <event type="alternative splicing"/>
    <isoform>
        <id>Q9H2B2-1</id>
        <name>1</name>
        <sequence type="displayed"/>
    </isoform>
    <isoform>
        <id>Q9H2B2-2</id>
        <name>2</name>
        <sequence type="described" ref="VSP_056643"/>
    </isoform>
</comment>
<comment type="tissue specificity">
    <text evidence="6">Expressed in melanocytes (PubMed:23999003). Expressed in brain. Within brain, expression is highest in hippocampus, with substantial levels also detected in amygdala and thalamus (PubMed:23999003).</text>
</comment>
<comment type="domain">
    <text evidence="2">Unlike in other synaptotagmin family members, the first C2 domain/C2A does not bind Ca(2+) neither mediates Ca(2+)-dependent phospholipid binding. An aspartate-to-serine substitution in this domain inactivates Ca(2+)/phospho-lipid binding.</text>
</comment>
<comment type="PTM">
    <text evidence="2">Phosphorylation at Ser-135 by MAPK8/JNK1 reduces interaction with KIF1A and neuronal dense core vesicles mobility.</text>
</comment>
<comment type="similarity">
    <text evidence="8">Belongs to the synaptotagmin family.</text>
</comment>
<comment type="sequence caution" evidence="8">
    <conflict type="erroneous initiation">
        <sequence resource="EMBL-CDS" id="BAA92580"/>
    </conflict>
    <text>Extended N-terminus.</text>
</comment>
<evidence type="ECO:0000250" key="1">
    <source>
        <dbReference type="UniProtKB" id="P40749"/>
    </source>
</evidence>
<evidence type="ECO:0000250" key="2">
    <source>
        <dbReference type="UniProtKB" id="P50232"/>
    </source>
</evidence>
<evidence type="ECO:0000255" key="3"/>
<evidence type="ECO:0000255" key="4">
    <source>
        <dbReference type="PROSITE-ProRule" id="PRU00041"/>
    </source>
</evidence>
<evidence type="ECO:0000256" key="5">
    <source>
        <dbReference type="SAM" id="MobiDB-lite"/>
    </source>
</evidence>
<evidence type="ECO:0000269" key="6">
    <source>
    </source>
</evidence>
<evidence type="ECO:0000303" key="7">
    <source>
    </source>
</evidence>
<evidence type="ECO:0000305" key="8"/>
<evidence type="ECO:0007829" key="9">
    <source>
        <dbReference type="PDB" id="1UGK"/>
    </source>
</evidence>
<feature type="chain" id="PRO_0000183948" description="Synaptotagmin-4">
    <location>
        <begin position="1"/>
        <end position="425"/>
    </location>
</feature>
<feature type="topological domain" description="Vesicular" evidence="3">
    <location>
        <begin position="1"/>
        <end position="16"/>
    </location>
</feature>
<feature type="transmembrane region" description="Helical" evidence="3">
    <location>
        <begin position="17"/>
        <end position="37"/>
    </location>
</feature>
<feature type="topological domain" description="Cytoplasmic" evidence="3">
    <location>
        <begin position="38"/>
        <end position="425"/>
    </location>
</feature>
<feature type="domain" description="C2 1" evidence="4">
    <location>
        <begin position="153"/>
        <end position="274"/>
    </location>
</feature>
<feature type="domain" description="C2 2" evidence="4">
    <location>
        <begin position="287"/>
        <end position="420"/>
    </location>
</feature>
<feature type="region of interest" description="Disordered" evidence="5">
    <location>
        <begin position="73"/>
        <end position="93"/>
    </location>
</feature>
<feature type="region of interest" description="Disordered" evidence="5">
    <location>
        <begin position="127"/>
        <end position="147"/>
    </location>
</feature>
<feature type="compositionally biased region" description="Basic and acidic residues" evidence="5">
    <location>
        <begin position="73"/>
        <end position="83"/>
    </location>
</feature>
<feature type="compositionally biased region" description="Low complexity" evidence="5">
    <location>
        <begin position="135"/>
        <end position="146"/>
    </location>
</feature>
<feature type="binding site" evidence="4">
    <location>
        <position position="246"/>
    </location>
    <ligand>
        <name>Ca(2+)</name>
        <dbReference type="ChEBI" id="CHEBI:29108"/>
    </ligand>
</feature>
<feature type="binding site" evidence="4">
    <location>
        <position position="249"/>
    </location>
    <ligand>
        <name>Ca(2+)</name>
        <dbReference type="ChEBI" id="CHEBI:29108"/>
    </ligand>
</feature>
<feature type="binding site" evidence="4">
    <location>
        <position position="252"/>
    </location>
    <ligand>
        <name>Ca(2+)</name>
        <dbReference type="ChEBI" id="CHEBI:29108"/>
    </ligand>
</feature>
<feature type="modified residue" description="Phosphoserine; by MAPK8" evidence="1">
    <location>
        <position position="135"/>
    </location>
</feature>
<feature type="splice variant" id="VSP_056643" description="In isoform 2." evidence="7">
    <location>
        <begin position="12"/>
        <end position="29"/>
    </location>
</feature>
<feature type="sequence variant" id="VAR_052239" description="In dbSNP:rs16977447.">
    <original>S</original>
    <variation>N</variation>
    <location>
        <position position="142"/>
    </location>
</feature>
<feature type="strand" evidence="9">
    <location>
        <begin position="156"/>
        <end position="164"/>
    </location>
</feature>
<feature type="helix" evidence="9">
    <location>
        <begin position="165"/>
        <end position="167"/>
    </location>
</feature>
<feature type="strand" evidence="9">
    <location>
        <begin position="169"/>
        <end position="179"/>
    </location>
</feature>
<feature type="turn" evidence="9">
    <location>
        <begin position="185"/>
        <end position="188"/>
    </location>
</feature>
<feature type="strand" evidence="9">
    <location>
        <begin position="191"/>
        <end position="199"/>
    </location>
</feature>
<feature type="turn" evidence="9">
    <location>
        <begin position="200"/>
        <end position="202"/>
    </location>
</feature>
<feature type="strand" evidence="9">
    <location>
        <begin position="204"/>
        <end position="207"/>
    </location>
</feature>
<feature type="strand" evidence="9">
    <location>
        <begin position="218"/>
        <end position="226"/>
    </location>
</feature>
<feature type="helix" evidence="9">
    <location>
        <begin position="233"/>
        <end position="235"/>
    </location>
</feature>
<feature type="strand" evidence="9">
    <location>
        <begin position="237"/>
        <end position="245"/>
    </location>
</feature>
<feature type="strand" evidence="9">
    <location>
        <begin position="255"/>
        <end position="260"/>
    </location>
</feature>
<feature type="strand" evidence="9">
    <location>
        <begin position="271"/>
        <end position="276"/>
    </location>
</feature>
<sequence>MAPITTSREEFDEIPTVVGIFSAFGLVFTVSLFAWICCQRKSSKSNKTPPYKFVHVLKGVDIYPENLNSKKKFGADDKNEVKNKPAVPKNSLHLDLEKRDLNGNFPKTNLKPGSPSDLENATPKLFLEGEKESVSPESLKSSTSLTSEEKQEKLGTLFFSLEYNFERKAFVVNIKEARGLPAMDEQSMTSDPYIKMTILPEKKHKVKTRVLRKTLDPAFDETFTFYGIPYTQIQELALHFTILSFDRFSRDDIIGEVLIPLSGIELSEGKMLMNREIIKRNVRKSSGRGELLISLCYQSTTNTLTVVVLKARHLPKSDVSGLSDPYVKVNLYHAKKRISKKKTHVKKCTPNAVFNELFVFDIPCEGLEDISVEFLVLDSERGSRNEVIGQLVLGAAAEGTGGEHWKEICDYPRRQIAKWHVLCDG</sequence>
<proteinExistence type="evidence at protein level"/>